<organism>
    <name type="scientific">Suid herpesvirus 1 (strain NIA-3)</name>
    <name type="common">SuHV-1</name>
    <name type="synonym">Pseudorabies virus (strain NIA-3)</name>
    <dbReference type="NCBI Taxonomy" id="10349"/>
    <lineage>
        <taxon>Viruses</taxon>
        <taxon>Duplodnaviria</taxon>
        <taxon>Heunggongvirae</taxon>
        <taxon>Peploviricota</taxon>
        <taxon>Herviviricetes</taxon>
        <taxon>Herpesvirales</taxon>
        <taxon>Orthoherpesviridae</taxon>
        <taxon>Alphaherpesvirinae</taxon>
        <taxon>Varicellovirus</taxon>
        <taxon>Varicellovirus suidalpha1</taxon>
        <taxon>Suid herpesvirus 1</taxon>
    </lineage>
</organism>
<protein>
    <recommendedName>
        <fullName>Serine/threonine-protein kinase UL13</fullName>
        <ecNumber evidence="6 8">2.7.11.1</ecNumber>
    </recommendedName>
</protein>
<accession>P30662</accession>
<reference key="1">
    <citation type="journal article" date="1992" name="J. Virol.">
        <title>Herpesviruses encode an unusual protein-serine/threonine kinase which is nonessential for growth in cultured cells.</title>
        <authorList>
            <person name="de Wind N."/>
            <person name="Domen J."/>
            <person name="Berns A.A."/>
        </authorList>
    </citation>
    <scope>NUCLEOTIDE SEQUENCE [GENOMIC DNA]</scope>
</reference>
<reference key="2">
    <citation type="journal article" date="2020" name="Vet. Res.">
        <title>PRV UL13 inhibits cGAS-STING-mediated IFN-beta production by phosphorylating IRF3.</title>
        <authorList>
            <person name="Bo Z."/>
            <person name="Miao Y."/>
            <person name="Xi R."/>
            <person name="Zhong Q."/>
            <person name="Bao C."/>
            <person name="Chen H."/>
            <person name="Sun L."/>
            <person name="Qian Y."/>
            <person name="Jung Y.S."/>
            <person name="Dai J."/>
        </authorList>
    </citation>
    <scope>FUNCTION</scope>
</reference>
<reference key="3">
    <citation type="journal article" date="2022" name="FASEB J.">
        <title>Pseudorabies virus kinase UL13 phosphorylates H2AX to foster viral replication.</title>
        <authorList>
            <person name="Ming X."/>
            <person name="Bo Z."/>
            <person name="Miao Y."/>
            <person name="Chen H."/>
            <person name="Bao C."/>
            <person name="Sun L."/>
            <person name="Xi R."/>
            <person name="Zhong Q."/>
            <person name="Zhao P."/>
            <person name="Jung Y.S."/>
            <person name="Qian Y."/>
        </authorList>
    </citation>
    <scope>FUNCTION</scope>
    <scope>CATALYTIC ACTIVITY</scope>
    <scope>SUBCELLULAR LOCATION</scope>
    <scope>MUTAGENESIS OF LYS-103 AND ASP-216</scope>
</reference>
<reference key="4">
    <citation type="journal article" date="2022" name="PLoS Pathog.">
        <title>Pseudorabies virus tegument protein UL13 recruits RNF5 to inhibit STING-mediated antiviral immunity.</title>
        <authorList>
            <person name="Kong Z."/>
            <person name="Yin H."/>
            <person name="Wang F."/>
            <person name="Liu Z."/>
            <person name="Luan X."/>
            <person name="Sun L."/>
            <person name="Liu W."/>
            <person name="Shang Y."/>
        </authorList>
    </citation>
    <scope>FUNCTION</scope>
    <scope>INTERACTION WITH HOST RNF5 AND STING1</scope>
    <scope>SUBCELLULAR LOCATION</scope>
</reference>
<reference key="5">
    <citation type="journal article" date="2022" name="Viruses">
        <title>Pseudorabies Virus Tegument Protein UL13 Suppresses RLR-Mediated Antiviral Innate Immunity through Regulating Receptor Transcription.</title>
        <authorList>
            <person name="Zhao N."/>
            <person name="Wang F."/>
            <person name="Kong Z."/>
            <person name="Shang Y."/>
        </authorList>
    </citation>
    <scope>FUNCTION</scope>
    <scope>SUBCELLULAR LOCATION</scope>
    <scope>MUTAGENESIS OF LYS-103 AND ASP-216</scope>
    <scope>CATALYTIC ACTIVITY</scope>
</reference>
<feature type="chain" id="PRO_0000086188" description="Serine/threonine-protein kinase UL13">
    <location>
        <begin position="1"/>
        <end position="398"/>
    </location>
</feature>
<feature type="domain" description="Protein kinase" evidence="2">
    <location>
        <begin position="80"/>
        <end position="398"/>
    </location>
</feature>
<feature type="region of interest" description="Disordered" evidence="4">
    <location>
        <begin position="1"/>
        <end position="44"/>
    </location>
</feature>
<feature type="compositionally biased region" description="Gly residues" evidence="4">
    <location>
        <begin position="1"/>
        <end position="10"/>
    </location>
</feature>
<feature type="active site" description="Proton acceptor" evidence="2 3">
    <location>
        <position position="194"/>
    </location>
</feature>
<feature type="binding site" evidence="2">
    <location>
        <begin position="86"/>
        <end position="94"/>
    </location>
    <ligand>
        <name>ATP</name>
        <dbReference type="ChEBI" id="CHEBI:30616"/>
    </ligand>
</feature>
<feature type="binding site" evidence="2">
    <location>
        <position position="103"/>
    </location>
    <ligand>
        <name>ATP</name>
        <dbReference type="ChEBI" id="CHEBI:30616"/>
    </ligand>
</feature>
<feature type="mutagenesis site" description="Loss of kinase activity towards host H2AX or IRF3." evidence="6">
    <original>K</original>
    <variation>R</variation>
    <location>
        <position position="103"/>
    </location>
</feature>
<feature type="mutagenesis site" description="Loss of kinase activity towards host H2AX or IRF3." evidence="6">
    <original>D</original>
    <variation>A</variation>
    <location>
        <position position="216"/>
    </location>
</feature>
<comment type="function">
    <text evidence="1 5 6 7 8">Multifunctional serine/threonine kinase that plays a role in several processes including egress of virus particles from the nucleus, modulation of the actin cytoskeleton and regulation of viral and cellular gene expression. Regulates the nuclear localization of viral envelopment factors UL34 and UL31, by phosphorylating the US3 kinase, indicating a role in nuclear egress. Disrupts host nuclear lamins, including LMNA and LMNB1. Phosphorylates the viral Fc receptor composed of glycoproteins E (gE) and I (gI). Phosphorylation of glycoprotein E (gE) by UL13 alters its subcellular localization, from the host early endosome to the plasma membrane. Participates in the transcriptional regulation of cellular and viral mRNAs mainly by phosphorylating the viral transcriptional regulator ICP22 (By similarity). Functions as an antagonist of the host RLR-mediated antiviral responses via suppression of the transcription of cytosolic receptors RIGI and IFIH1 (PubMed:35891444). Facilitates immune evasion also by recruiting host RNF5 to initiate the 'Lys-27'-/'Lys-29'-linked polyubiquitination of STING1; leading to its degradation (PubMed:35584187). Blocks host IFN-beta transactivation mediated by the cGAS-STING pathway by phosphorylating host IRF3. In turn, IRF3 binding to the IRF3-responsive promoters and downstream interferon stimulated genes/ISG expression are greatly impaired (PubMed:35891444). Induces the activation of the host DNA damage response via H2AX phosphorylation to improve efficient viral replication and progeny production (PubMed:35199383).</text>
</comment>
<comment type="catalytic activity">
    <reaction evidence="6">
        <text>L-seryl-[protein] + ATP = O-phospho-L-seryl-[protein] + ADP + H(+)</text>
        <dbReference type="Rhea" id="RHEA:17989"/>
        <dbReference type="Rhea" id="RHEA-COMP:9863"/>
        <dbReference type="Rhea" id="RHEA-COMP:11604"/>
        <dbReference type="ChEBI" id="CHEBI:15378"/>
        <dbReference type="ChEBI" id="CHEBI:29999"/>
        <dbReference type="ChEBI" id="CHEBI:30616"/>
        <dbReference type="ChEBI" id="CHEBI:83421"/>
        <dbReference type="ChEBI" id="CHEBI:456216"/>
        <dbReference type="EC" id="2.7.11.1"/>
    </reaction>
</comment>
<comment type="catalytic activity">
    <reaction>
        <text>L-threonyl-[protein] + ATP = O-phospho-L-threonyl-[protein] + ADP + H(+)</text>
        <dbReference type="Rhea" id="RHEA:46608"/>
        <dbReference type="Rhea" id="RHEA-COMP:11060"/>
        <dbReference type="Rhea" id="RHEA-COMP:11605"/>
        <dbReference type="ChEBI" id="CHEBI:15378"/>
        <dbReference type="ChEBI" id="CHEBI:30013"/>
        <dbReference type="ChEBI" id="CHEBI:30616"/>
        <dbReference type="ChEBI" id="CHEBI:61977"/>
        <dbReference type="ChEBI" id="CHEBI:456216"/>
        <dbReference type="EC" id="2.7.11.1"/>
    </reaction>
</comment>
<comment type="subcellular location">
    <subcellularLocation>
        <location evidence="1">Virion tegument</location>
    </subcellularLocation>
    <subcellularLocation>
        <location evidence="6 7">Host nucleus</location>
    </subcellularLocation>
    <subcellularLocation>
        <location evidence="7">Host cytoplasm</location>
    </subcellularLocation>
    <subcellularLocation>
        <location evidence="7">Host endoplasmic reticulum</location>
    </subcellularLocation>
</comment>
<comment type="PTM">
    <text evidence="1">Autophosphorylated.</text>
</comment>
<comment type="miscellaneous">
    <text>Displays a substrate specificity similar to host CDC2.</text>
</comment>
<comment type="similarity">
    <text evidence="2">Belongs to the protein kinase superfamily. Ser/Thr protein kinase family.</text>
</comment>
<gene>
    <name type="primary">UL13</name>
    <name type="synonym">ULPK</name>
</gene>
<evidence type="ECO:0000250" key="1">
    <source>
        <dbReference type="UniProtKB" id="P04290"/>
    </source>
</evidence>
<evidence type="ECO:0000255" key="2">
    <source>
        <dbReference type="PROSITE-ProRule" id="PRU00159"/>
    </source>
</evidence>
<evidence type="ECO:0000255" key="3">
    <source>
        <dbReference type="PROSITE-ProRule" id="PRU10027"/>
    </source>
</evidence>
<evidence type="ECO:0000256" key="4">
    <source>
        <dbReference type="SAM" id="MobiDB-lite"/>
    </source>
</evidence>
<evidence type="ECO:0000269" key="5">
    <source>
    </source>
</evidence>
<evidence type="ECO:0000269" key="6">
    <source>
    </source>
</evidence>
<evidence type="ECO:0000269" key="7">
    <source>
    </source>
</evidence>
<evidence type="ECO:0000269" key="8">
    <source>
    </source>
</evidence>
<sequence length="398" mass="41417">MAAGGGGGGVSRAALARPPIHRGTSAPGGAIAAAGGDGDGDEASRLLGRAQPREAPYLIPRPDGDLAVPDDLQYATLDLTGDPVAVGAGSYGSVLVYGSVAVKTLRAGFGHEAVMTLLAAEEARSAGVRGVVRLMGLSAPLRQLMFPAYEMDMDAYRRSLTARPGHVVHALGRVFTELGRALVFLNGRGLSHLDVKGGNIFVRTCGNMVVTAVIGDFSLMALNSRSALADPRFRLARRKALKITSLARSPPTGVLLGHARDRPTRVLMDFINGRPPPPGPLPYEVGLAIDLCALGHVLLDVALGLRPQRGQALTREYAVEVLARRCVLFAALLPPGSGPSAEALAGDILEEELAAGFREGVASSRPGNQPPRTVAPLLELVARFCGEDGGARFAELAA</sequence>
<keyword id="KW-0067">ATP-binding</keyword>
<keyword id="KW-1035">Host cytoplasm</keyword>
<keyword id="KW-1038">Host endoplasmic reticulum</keyword>
<keyword id="KW-1048">Host nucleus</keyword>
<keyword id="KW-0945">Host-virus interaction</keyword>
<keyword id="KW-1090">Inhibition of host innate immune response by virus</keyword>
<keyword id="KW-1113">Inhibition of host RLR pathway by virus</keyword>
<keyword id="KW-0418">Kinase</keyword>
<keyword id="KW-0464">Manganese</keyword>
<keyword id="KW-0547">Nucleotide-binding</keyword>
<keyword id="KW-0597">Phosphoprotein</keyword>
<keyword id="KW-0723">Serine/threonine-protein kinase</keyword>
<keyword id="KW-0808">Transferase</keyword>
<keyword id="KW-0899">Viral immunoevasion</keyword>
<keyword id="KW-0946">Virion</keyword>
<keyword id="KW-0920">Virion tegument</keyword>
<dbReference type="EC" id="2.7.11.1" evidence="6 8"/>
<dbReference type="EMBL" id="M94870">
    <property type="protein sequence ID" value="AAA47481.1"/>
    <property type="molecule type" value="Genomic_DNA"/>
</dbReference>
<dbReference type="PIR" id="B42744">
    <property type="entry name" value="WZBEN3"/>
</dbReference>
<dbReference type="RefSeq" id="YP_068362.1">
    <property type="nucleotide sequence ID" value="NC_006151.1"/>
</dbReference>
<dbReference type="GeneID" id="2952530"/>
<dbReference type="KEGG" id="vg:2952530"/>
<dbReference type="GO" id="GO:0044165">
    <property type="term" value="C:host cell endoplasmic reticulum"/>
    <property type="evidence" value="ECO:0007669"/>
    <property type="project" value="UniProtKB-SubCell"/>
</dbReference>
<dbReference type="GO" id="GO:0042025">
    <property type="term" value="C:host cell nucleus"/>
    <property type="evidence" value="ECO:0007669"/>
    <property type="project" value="UniProtKB-SubCell"/>
</dbReference>
<dbReference type="GO" id="GO:0019033">
    <property type="term" value="C:viral tegument"/>
    <property type="evidence" value="ECO:0007669"/>
    <property type="project" value="UniProtKB-SubCell"/>
</dbReference>
<dbReference type="GO" id="GO:0005524">
    <property type="term" value="F:ATP binding"/>
    <property type="evidence" value="ECO:0007669"/>
    <property type="project" value="UniProtKB-KW"/>
</dbReference>
<dbReference type="GO" id="GO:0106310">
    <property type="term" value="F:protein serine kinase activity"/>
    <property type="evidence" value="ECO:0007669"/>
    <property type="project" value="RHEA"/>
</dbReference>
<dbReference type="GO" id="GO:0004674">
    <property type="term" value="F:protein serine/threonine kinase activity"/>
    <property type="evidence" value="ECO:0007669"/>
    <property type="project" value="UniProtKB-KW"/>
</dbReference>
<dbReference type="GO" id="GO:0052170">
    <property type="term" value="P:symbiont-mediated suppression of host innate immune response"/>
    <property type="evidence" value="ECO:0007669"/>
    <property type="project" value="UniProtKB-KW"/>
</dbReference>
<dbReference type="Gene3D" id="1.10.510.10">
    <property type="entry name" value="Transferase(Phosphotransferase) domain 1"/>
    <property type="match status" value="1"/>
</dbReference>
<dbReference type="InterPro" id="IPR011009">
    <property type="entry name" value="Kinase-like_dom_sf"/>
</dbReference>
<dbReference type="InterPro" id="IPR000719">
    <property type="entry name" value="Prot_kinase_dom"/>
</dbReference>
<dbReference type="InterPro" id="IPR008271">
    <property type="entry name" value="Ser/Thr_kinase_AS"/>
</dbReference>
<dbReference type="SUPFAM" id="SSF56112">
    <property type="entry name" value="Protein kinase-like (PK-like)"/>
    <property type="match status" value="1"/>
</dbReference>
<dbReference type="PROSITE" id="PS50011">
    <property type="entry name" value="PROTEIN_KINASE_DOM"/>
    <property type="match status" value="1"/>
</dbReference>
<dbReference type="PROSITE" id="PS00108">
    <property type="entry name" value="PROTEIN_KINASE_ST"/>
    <property type="match status" value="1"/>
</dbReference>
<organismHost>
    <name type="scientific">Sus scrofa</name>
    <name type="common">Pig</name>
    <dbReference type="NCBI Taxonomy" id="9823"/>
</organismHost>
<proteinExistence type="evidence at protein level"/>
<name>UL13_SUHVN</name>